<dbReference type="EMBL" id="AE008384">
    <property type="protein sequence ID" value="AAM30140.1"/>
    <property type="molecule type" value="Genomic_DNA"/>
</dbReference>
<dbReference type="RefSeq" id="WP_011032397.1">
    <property type="nucleotide sequence ID" value="NC_003901.1"/>
</dbReference>
<dbReference type="SMR" id="Q8PZP8"/>
<dbReference type="KEGG" id="mma:MM_0444"/>
<dbReference type="PATRIC" id="fig|192952.21.peg.536"/>
<dbReference type="eggNOG" id="arCOG04152">
    <property type="taxonomic scope" value="Archaea"/>
</dbReference>
<dbReference type="HOGENOM" id="CLU_075726_0_0_2"/>
<dbReference type="Proteomes" id="UP000000595">
    <property type="component" value="Chromosome"/>
</dbReference>
<dbReference type="GO" id="GO:0003677">
    <property type="term" value="F:DNA binding"/>
    <property type="evidence" value="ECO:0007669"/>
    <property type="project" value="UniProtKB-KW"/>
</dbReference>
<dbReference type="GO" id="GO:0003700">
    <property type="term" value="F:DNA-binding transcription factor activity"/>
    <property type="evidence" value="ECO:0007669"/>
    <property type="project" value="UniProtKB-UniRule"/>
</dbReference>
<dbReference type="CDD" id="cd00093">
    <property type="entry name" value="HTH_XRE"/>
    <property type="match status" value="1"/>
</dbReference>
<dbReference type="Gene3D" id="1.10.260.40">
    <property type="entry name" value="lambda repressor-like DNA-binding domains"/>
    <property type="match status" value="1"/>
</dbReference>
<dbReference type="HAMAP" id="MF_00584">
    <property type="entry name" value="HTH_type_cro_C1"/>
    <property type="match status" value="1"/>
</dbReference>
<dbReference type="InterPro" id="IPR020886">
    <property type="entry name" value="Arc_TR_HTH"/>
</dbReference>
<dbReference type="InterPro" id="IPR001387">
    <property type="entry name" value="Cro/C1-type_HTH"/>
</dbReference>
<dbReference type="InterPro" id="IPR010982">
    <property type="entry name" value="Lambda_DNA-bd_dom_sf"/>
</dbReference>
<dbReference type="NCBIfam" id="NF003162">
    <property type="entry name" value="PRK04140.1"/>
    <property type="match status" value="1"/>
</dbReference>
<dbReference type="Pfam" id="PF01381">
    <property type="entry name" value="HTH_3"/>
    <property type="match status" value="1"/>
</dbReference>
<dbReference type="SMART" id="SM00530">
    <property type="entry name" value="HTH_XRE"/>
    <property type="match status" value="1"/>
</dbReference>
<dbReference type="SUPFAM" id="SSF47413">
    <property type="entry name" value="lambda repressor-like DNA-binding domains"/>
    <property type="match status" value="1"/>
</dbReference>
<dbReference type="PROSITE" id="PS50943">
    <property type="entry name" value="HTH_CROC1"/>
    <property type="match status" value="1"/>
</dbReference>
<organism>
    <name type="scientific">Methanosarcina mazei (strain ATCC BAA-159 / DSM 3647 / Goe1 / Go1 / JCM 11833 / OCM 88)</name>
    <name type="common">Methanosarcina frisia</name>
    <dbReference type="NCBI Taxonomy" id="192952"/>
    <lineage>
        <taxon>Archaea</taxon>
        <taxon>Methanobacteriati</taxon>
        <taxon>Methanobacteriota</taxon>
        <taxon>Stenosarchaea group</taxon>
        <taxon>Methanomicrobia</taxon>
        <taxon>Methanosarcinales</taxon>
        <taxon>Methanosarcinaceae</taxon>
        <taxon>Methanosarcina</taxon>
    </lineage>
</organism>
<feature type="chain" id="PRO_0000144858" description="Putative HTH-type transcriptional regulatory protein MM_0444">
    <location>
        <begin position="1"/>
        <end position="327"/>
    </location>
</feature>
<feature type="domain" description="HTH cro/C1-type" evidence="1">
    <location>
        <begin position="132"/>
        <end position="190"/>
    </location>
</feature>
<feature type="DNA-binding region" description="H-T-H motif" evidence="1">
    <location>
        <begin position="143"/>
        <end position="162"/>
    </location>
</feature>
<feature type="region of interest" description="Disordered" evidence="2">
    <location>
        <begin position="195"/>
        <end position="214"/>
    </location>
</feature>
<feature type="compositionally biased region" description="Basic and acidic residues" evidence="2">
    <location>
        <begin position="201"/>
        <end position="211"/>
    </location>
</feature>
<name>Y444_METMA</name>
<accession>Q8PZP8</accession>
<reference key="1">
    <citation type="journal article" date="2002" name="J. Mol. Microbiol. Biotechnol.">
        <title>The genome of Methanosarcina mazei: evidence for lateral gene transfer between Bacteria and Archaea.</title>
        <authorList>
            <person name="Deppenmeier U."/>
            <person name="Johann A."/>
            <person name="Hartsch T."/>
            <person name="Merkl R."/>
            <person name="Schmitz R.A."/>
            <person name="Martinez-Arias R."/>
            <person name="Henne A."/>
            <person name="Wiezer A."/>
            <person name="Baeumer S."/>
            <person name="Jacobi C."/>
            <person name="Brueggemann H."/>
            <person name="Lienard T."/>
            <person name="Christmann A."/>
            <person name="Boemecke M."/>
            <person name="Steckel S."/>
            <person name="Bhattacharyya A."/>
            <person name="Lykidis A."/>
            <person name="Overbeek R."/>
            <person name="Klenk H.-P."/>
            <person name="Gunsalus R.P."/>
            <person name="Fritz H.-J."/>
            <person name="Gottschalk G."/>
        </authorList>
    </citation>
    <scope>NUCLEOTIDE SEQUENCE [LARGE SCALE GENOMIC DNA]</scope>
    <source>
        <strain>ATCC BAA-159 / DSM 3647 / Goe1 / Go1 / JCM 11833 / OCM 88</strain>
    </source>
</reference>
<proteinExistence type="inferred from homology"/>
<protein>
    <recommendedName>
        <fullName evidence="1">Putative HTH-type transcriptional regulatory protein MM_0444</fullName>
    </recommendedName>
</protein>
<sequence length="327" mass="36296">MTKEVLIHQIIDVLARAGFALSDRCNIRPRSFDVAARKDDTLLLCKVLFNIDGLNEETAREMKYLAEYLGGSAIVVGAKTRDQMLEDSVVYMRYDILALSVQTLYDYFVENIRPLVSAAPGGLYVSIEGDLLKKARTTQSMSLGTLASMVGVSRRTISKYEEEGMDASIDVVLHLEDIFGVELAKPIDILKSCGSRKPRKKAEPEKEEPKGKPGTLLPEDLILNTISMLGYDVLPTAQAPFKAISRDKSSVILTGVSEFNTTVIKRAHLMSSISCITETQSVFIINGRSKLKSVENTVLIEKKELDTISDSQELLDFIEERKDTHEA</sequence>
<evidence type="ECO:0000255" key="1">
    <source>
        <dbReference type="HAMAP-Rule" id="MF_00584"/>
    </source>
</evidence>
<evidence type="ECO:0000256" key="2">
    <source>
        <dbReference type="SAM" id="MobiDB-lite"/>
    </source>
</evidence>
<keyword id="KW-0238">DNA-binding</keyword>
<keyword id="KW-0804">Transcription</keyword>
<keyword id="KW-0805">Transcription regulation</keyword>
<gene>
    <name type="ordered locus">MM_0444</name>
</gene>